<sequence>MSKNPPDLSGGEVKAKQIRFDSDARSALQEGVDQMAEAVKVTLGPKGRNVVLEKSFGAPTITKDGVTVAKEIELEERLPNIGAQVLKEAASKTNDDAGDGTTTATVLAQSVINAGMKSVTSGANPMDVKRGITAAAEEVVTHLRNQSDPVEGKDRISQVATISANNDDAIGDLIADAFERVGQDGVITVEEARGIETYLDVVEGMQFDRGYLSPYFVTDSEEMEAVLEDAYILIYDDEVGNMQDLLPILEKVSQTSNPLLIIAEDVEGEALATLVVNKMRGTLKVSAVKAPGFGDRRQSMLEDIAVLTGGTVISEEKGYRLENATLDYLGQADRVTIDQDNTTIVGGEGSEEEIEARVNQIRQQIANSTSDYDQEKLQERLAKLAGGVAVLNVGAATEPEMKAQKALVEDALSATRAAVDEGVLPGGGVAYLRALESIEEVEVENEDQEIGVSIVREALEAPLRQIAENTGHEGSIVVQKVKDGEGDFGFNARTEEYGDLLDQGVLDPTKVTRSALENAASVGGMLLTTEAVIADLEDEDDDDGGGGGGGGMPAGGAGGMGGMGGMGGMM</sequence>
<gene>
    <name evidence="1" type="primary">groEL1</name>
    <name evidence="1" type="synonym">groL1</name>
    <name type="ordered locus">SRU_0237</name>
</gene>
<reference key="1">
    <citation type="journal article" date="2005" name="Proc. Natl. Acad. Sci. U.S.A.">
        <title>The genome of Salinibacter ruber: convergence and gene exchange among hyperhalophilic bacteria and archaea.</title>
        <authorList>
            <person name="Mongodin E.F."/>
            <person name="Nelson K.E."/>
            <person name="Daugherty S."/>
            <person name="DeBoy R.T."/>
            <person name="Wister J."/>
            <person name="Khouri H."/>
            <person name="Weidman J."/>
            <person name="Walsh D.A."/>
            <person name="Papke R.T."/>
            <person name="Sanchez Perez G."/>
            <person name="Sharma A.K."/>
            <person name="Nesbo C.L."/>
            <person name="MacLeod D."/>
            <person name="Bapteste E."/>
            <person name="Doolittle W.F."/>
            <person name="Charlebois R.L."/>
            <person name="Legault B."/>
            <person name="Rodriguez-Valera F."/>
        </authorList>
    </citation>
    <scope>NUCLEOTIDE SEQUENCE [LARGE SCALE GENOMIC DNA]</scope>
    <source>
        <strain>DSM 13855 / CECT 5946 / M31</strain>
    </source>
</reference>
<comment type="function">
    <text evidence="1">Together with its co-chaperonin GroES, plays an essential role in assisting protein folding. The GroEL-GroES system forms a nano-cage that allows encapsulation of the non-native substrate proteins and provides a physical environment optimized to promote and accelerate protein folding.</text>
</comment>
<comment type="catalytic activity">
    <reaction evidence="1">
        <text>ATP + H2O + a folded polypeptide = ADP + phosphate + an unfolded polypeptide.</text>
        <dbReference type="EC" id="5.6.1.7"/>
    </reaction>
</comment>
<comment type="subunit">
    <text evidence="1">Forms a cylinder of 14 subunits composed of two heptameric rings stacked back-to-back. Interacts with the co-chaperonin GroES.</text>
</comment>
<comment type="subcellular location">
    <subcellularLocation>
        <location evidence="1">Cytoplasm</location>
    </subcellularLocation>
</comment>
<comment type="similarity">
    <text evidence="1">Belongs to the chaperonin (HSP60) family.</text>
</comment>
<feature type="chain" id="PRO_0000256982" description="Chaperonin GroEL 1">
    <location>
        <begin position="1"/>
        <end position="570"/>
    </location>
</feature>
<feature type="region of interest" description="Disordered" evidence="2">
    <location>
        <begin position="537"/>
        <end position="570"/>
    </location>
</feature>
<feature type="compositionally biased region" description="Gly residues" evidence="2">
    <location>
        <begin position="545"/>
        <end position="570"/>
    </location>
</feature>
<feature type="binding site" evidence="1">
    <location>
        <begin position="42"/>
        <end position="45"/>
    </location>
    <ligand>
        <name>ATP</name>
        <dbReference type="ChEBI" id="CHEBI:30616"/>
    </ligand>
</feature>
<feature type="binding site" evidence="1">
    <location>
        <position position="63"/>
    </location>
    <ligand>
        <name>ATP</name>
        <dbReference type="ChEBI" id="CHEBI:30616"/>
    </ligand>
</feature>
<feature type="binding site" evidence="1">
    <location>
        <begin position="99"/>
        <end position="103"/>
    </location>
    <ligand>
        <name>ATP</name>
        <dbReference type="ChEBI" id="CHEBI:30616"/>
    </ligand>
</feature>
<feature type="binding site" evidence="1">
    <location>
        <position position="427"/>
    </location>
    <ligand>
        <name>ATP</name>
        <dbReference type="ChEBI" id="CHEBI:30616"/>
    </ligand>
</feature>
<feature type="binding site" evidence="1">
    <location>
        <position position="507"/>
    </location>
    <ligand>
        <name>ATP</name>
        <dbReference type="ChEBI" id="CHEBI:30616"/>
    </ligand>
</feature>
<keyword id="KW-0067">ATP-binding</keyword>
<keyword id="KW-0143">Chaperone</keyword>
<keyword id="KW-0963">Cytoplasm</keyword>
<keyword id="KW-0413">Isomerase</keyword>
<keyword id="KW-0547">Nucleotide-binding</keyword>
<keyword id="KW-1185">Reference proteome</keyword>
<accession>Q2S5Z8</accession>
<proteinExistence type="inferred from homology"/>
<protein>
    <recommendedName>
        <fullName evidence="1">Chaperonin GroEL 1</fullName>
        <ecNumber evidence="1">5.6.1.7</ecNumber>
    </recommendedName>
    <alternativeName>
        <fullName evidence="1">60 kDa chaperonin 1</fullName>
    </alternativeName>
    <alternativeName>
        <fullName evidence="1">Chaperonin-60 1</fullName>
        <shortName evidence="1">Cpn60 1</shortName>
    </alternativeName>
</protein>
<name>CH601_SALRD</name>
<organism>
    <name type="scientific">Salinibacter ruber (strain DSM 13855 / M31)</name>
    <dbReference type="NCBI Taxonomy" id="309807"/>
    <lineage>
        <taxon>Bacteria</taxon>
        <taxon>Pseudomonadati</taxon>
        <taxon>Rhodothermota</taxon>
        <taxon>Rhodothermia</taxon>
        <taxon>Rhodothermales</taxon>
        <taxon>Salinibacteraceae</taxon>
        <taxon>Salinibacter</taxon>
    </lineage>
</organism>
<dbReference type="EC" id="5.6.1.7" evidence="1"/>
<dbReference type="EMBL" id="CP000159">
    <property type="protein sequence ID" value="ABC43727.1"/>
    <property type="molecule type" value="Genomic_DNA"/>
</dbReference>
<dbReference type="RefSeq" id="WP_011403016.1">
    <property type="nucleotide sequence ID" value="NC_007677.1"/>
</dbReference>
<dbReference type="RefSeq" id="YP_444383.1">
    <property type="nucleotide sequence ID" value="NC_007677.1"/>
</dbReference>
<dbReference type="SMR" id="Q2S5Z8"/>
<dbReference type="STRING" id="309807.SRU_0237"/>
<dbReference type="EnsemblBacteria" id="ABC43727">
    <property type="protein sequence ID" value="ABC43727"/>
    <property type="gene ID" value="SRU_0237"/>
</dbReference>
<dbReference type="GeneID" id="83727144"/>
<dbReference type="KEGG" id="sru:SRU_0237"/>
<dbReference type="PATRIC" id="fig|309807.25.peg.241"/>
<dbReference type="eggNOG" id="COG0459">
    <property type="taxonomic scope" value="Bacteria"/>
</dbReference>
<dbReference type="HOGENOM" id="CLU_016503_3_0_10"/>
<dbReference type="OrthoDB" id="9766614at2"/>
<dbReference type="Proteomes" id="UP000008674">
    <property type="component" value="Chromosome"/>
</dbReference>
<dbReference type="GO" id="GO:0005737">
    <property type="term" value="C:cytoplasm"/>
    <property type="evidence" value="ECO:0007669"/>
    <property type="project" value="UniProtKB-SubCell"/>
</dbReference>
<dbReference type="GO" id="GO:0005524">
    <property type="term" value="F:ATP binding"/>
    <property type="evidence" value="ECO:0007669"/>
    <property type="project" value="UniProtKB-UniRule"/>
</dbReference>
<dbReference type="GO" id="GO:0140662">
    <property type="term" value="F:ATP-dependent protein folding chaperone"/>
    <property type="evidence" value="ECO:0007669"/>
    <property type="project" value="InterPro"/>
</dbReference>
<dbReference type="GO" id="GO:0016853">
    <property type="term" value="F:isomerase activity"/>
    <property type="evidence" value="ECO:0007669"/>
    <property type="project" value="UniProtKB-KW"/>
</dbReference>
<dbReference type="GO" id="GO:0051082">
    <property type="term" value="F:unfolded protein binding"/>
    <property type="evidence" value="ECO:0007669"/>
    <property type="project" value="UniProtKB-UniRule"/>
</dbReference>
<dbReference type="GO" id="GO:0042026">
    <property type="term" value="P:protein refolding"/>
    <property type="evidence" value="ECO:0007669"/>
    <property type="project" value="UniProtKB-UniRule"/>
</dbReference>
<dbReference type="CDD" id="cd03344">
    <property type="entry name" value="GroEL"/>
    <property type="match status" value="1"/>
</dbReference>
<dbReference type="FunFam" id="3.50.7.10:FF:000001">
    <property type="entry name" value="60 kDa chaperonin"/>
    <property type="match status" value="1"/>
</dbReference>
<dbReference type="Gene3D" id="3.50.7.10">
    <property type="entry name" value="GroEL"/>
    <property type="match status" value="1"/>
</dbReference>
<dbReference type="Gene3D" id="1.10.560.10">
    <property type="entry name" value="GroEL-like equatorial domain"/>
    <property type="match status" value="1"/>
</dbReference>
<dbReference type="Gene3D" id="3.30.260.10">
    <property type="entry name" value="TCP-1-like chaperonin intermediate domain"/>
    <property type="match status" value="1"/>
</dbReference>
<dbReference type="HAMAP" id="MF_00600">
    <property type="entry name" value="CH60"/>
    <property type="match status" value="1"/>
</dbReference>
<dbReference type="InterPro" id="IPR018370">
    <property type="entry name" value="Chaperonin_Cpn60_CS"/>
</dbReference>
<dbReference type="InterPro" id="IPR001844">
    <property type="entry name" value="Cpn60/GroEL"/>
</dbReference>
<dbReference type="InterPro" id="IPR002423">
    <property type="entry name" value="Cpn60/GroEL/TCP-1"/>
</dbReference>
<dbReference type="InterPro" id="IPR027409">
    <property type="entry name" value="GroEL-like_apical_dom_sf"/>
</dbReference>
<dbReference type="InterPro" id="IPR027413">
    <property type="entry name" value="GROEL-like_equatorial_sf"/>
</dbReference>
<dbReference type="InterPro" id="IPR027410">
    <property type="entry name" value="TCP-1-like_intermed_sf"/>
</dbReference>
<dbReference type="NCBIfam" id="TIGR02348">
    <property type="entry name" value="GroEL"/>
    <property type="match status" value="1"/>
</dbReference>
<dbReference type="NCBIfam" id="NF000592">
    <property type="entry name" value="PRK00013.1"/>
    <property type="match status" value="1"/>
</dbReference>
<dbReference type="NCBIfam" id="NF009487">
    <property type="entry name" value="PRK12849.1"/>
    <property type="match status" value="1"/>
</dbReference>
<dbReference type="NCBIfam" id="NF009488">
    <property type="entry name" value="PRK12850.1"/>
    <property type="match status" value="1"/>
</dbReference>
<dbReference type="NCBIfam" id="NF009489">
    <property type="entry name" value="PRK12851.1"/>
    <property type="match status" value="1"/>
</dbReference>
<dbReference type="PANTHER" id="PTHR45633">
    <property type="entry name" value="60 KDA HEAT SHOCK PROTEIN, MITOCHONDRIAL"/>
    <property type="match status" value="1"/>
</dbReference>
<dbReference type="Pfam" id="PF00118">
    <property type="entry name" value="Cpn60_TCP1"/>
    <property type="match status" value="1"/>
</dbReference>
<dbReference type="PRINTS" id="PR00298">
    <property type="entry name" value="CHAPERONIN60"/>
</dbReference>
<dbReference type="SUPFAM" id="SSF52029">
    <property type="entry name" value="GroEL apical domain-like"/>
    <property type="match status" value="1"/>
</dbReference>
<dbReference type="SUPFAM" id="SSF48592">
    <property type="entry name" value="GroEL equatorial domain-like"/>
    <property type="match status" value="1"/>
</dbReference>
<dbReference type="SUPFAM" id="SSF54849">
    <property type="entry name" value="GroEL-intermediate domain like"/>
    <property type="match status" value="1"/>
</dbReference>
<dbReference type="PROSITE" id="PS00296">
    <property type="entry name" value="CHAPERONINS_CPN60"/>
    <property type="match status" value="1"/>
</dbReference>
<evidence type="ECO:0000255" key="1">
    <source>
        <dbReference type="HAMAP-Rule" id="MF_00600"/>
    </source>
</evidence>
<evidence type="ECO:0000256" key="2">
    <source>
        <dbReference type="SAM" id="MobiDB-lite"/>
    </source>
</evidence>